<name>FLGI_ESCF3</name>
<protein>
    <recommendedName>
        <fullName evidence="1">Flagellar P-ring protein</fullName>
    </recommendedName>
    <alternativeName>
        <fullName evidence="1">Basal body P-ring protein</fullName>
    </alternativeName>
</protein>
<sequence length="365" mass="38234">MIKFLSTFMLLLVTTVVQAERIRDLTSVQGVRQNSLIGYGLVVGLDGTGDQTTQTPFTTQTLNNMLSQLGITVPAGTNMQLKNVAAVMVTASLPPFARQGQTIDVVVSSMGNAKSLRGGTLLMTPLKGVDSQVYALAQGNILVGGAGASAGGSSVQVNQLNGGRITNGAIIERELPSQFGAGNTLNLQLNDEDFAMAQQIADTINRARGYGSATALDSRTIQVNVPSGNSSQVRFLADIQNMQVNVTPQDAKVVINSRTGSVVMNREVTLDSCAVAQGNLSVTVNRQANVSQPDTPFGGGQTVVTPQTQIDLRQSGGSLQSVRSSANLNNVVRALNALGATPMDLMSILQSMQSAGCLRAKLEII</sequence>
<comment type="function">
    <text evidence="1">Assembles around the rod to form the L-ring and probably protects the motor/basal body from shearing forces during rotation.</text>
</comment>
<comment type="subunit">
    <text evidence="1">The basal body constitutes a major portion of the flagellar organelle and consists of four rings (L,P,S, and M) mounted on a central rod.</text>
</comment>
<comment type="subcellular location">
    <subcellularLocation>
        <location evidence="1">Periplasm</location>
    </subcellularLocation>
    <subcellularLocation>
        <location evidence="1">Bacterial flagellum basal body</location>
    </subcellularLocation>
</comment>
<comment type="similarity">
    <text evidence="1">Belongs to the FlgI family.</text>
</comment>
<accession>B7LT57</accession>
<dbReference type="EMBL" id="CU928158">
    <property type="protein sequence ID" value="CAQ89361.1"/>
    <property type="molecule type" value="Genomic_DNA"/>
</dbReference>
<dbReference type="RefSeq" id="WP_002431495.1">
    <property type="nucleotide sequence ID" value="NC_011740.1"/>
</dbReference>
<dbReference type="SMR" id="B7LT57"/>
<dbReference type="GeneID" id="75057116"/>
<dbReference type="KEGG" id="efe:EFER_1848"/>
<dbReference type="HOGENOM" id="CLU_045235_1_0_6"/>
<dbReference type="OrthoDB" id="9786431at2"/>
<dbReference type="Proteomes" id="UP000000745">
    <property type="component" value="Chromosome"/>
</dbReference>
<dbReference type="GO" id="GO:0009428">
    <property type="term" value="C:bacterial-type flagellum basal body, distal rod, P ring"/>
    <property type="evidence" value="ECO:0007669"/>
    <property type="project" value="InterPro"/>
</dbReference>
<dbReference type="GO" id="GO:0030288">
    <property type="term" value="C:outer membrane-bounded periplasmic space"/>
    <property type="evidence" value="ECO:0007669"/>
    <property type="project" value="InterPro"/>
</dbReference>
<dbReference type="GO" id="GO:0005198">
    <property type="term" value="F:structural molecule activity"/>
    <property type="evidence" value="ECO:0007669"/>
    <property type="project" value="InterPro"/>
</dbReference>
<dbReference type="GO" id="GO:0071973">
    <property type="term" value="P:bacterial-type flagellum-dependent cell motility"/>
    <property type="evidence" value="ECO:0007669"/>
    <property type="project" value="InterPro"/>
</dbReference>
<dbReference type="HAMAP" id="MF_00416">
    <property type="entry name" value="FlgI"/>
    <property type="match status" value="1"/>
</dbReference>
<dbReference type="InterPro" id="IPR001782">
    <property type="entry name" value="Flag_FlgI"/>
</dbReference>
<dbReference type="NCBIfam" id="NF003676">
    <property type="entry name" value="PRK05303.1"/>
    <property type="match status" value="1"/>
</dbReference>
<dbReference type="PANTHER" id="PTHR30381">
    <property type="entry name" value="FLAGELLAR P-RING PERIPLASMIC PROTEIN FLGI"/>
    <property type="match status" value="1"/>
</dbReference>
<dbReference type="PANTHER" id="PTHR30381:SF0">
    <property type="entry name" value="FLAGELLAR P-RING PROTEIN"/>
    <property type="match status" value="1"/>
</dbReference>
<dbReference type="Pfam" id="PF02119">
    <property type="entry name" value="FlgI"/>
    <property type="match status" value="1"/>
</dbReference>
<dbReference type="PRINTS" id="PR01010">
    <property type="entry name" value="FLGPRINGFLGI"/>
</dbReference>
<evidence type="ECO:0000255" key="1">
    <source>
        <dbReference type="HAMAP-Rule" id="MF_00416"/>
    </source>
</evidence>
<gene>
    <name evidence="1" type="primary">flgI</name>
    <name type="ordered locus">EFER_1848</name>
</gene>
<keyword id="KW-0975">Bacterial flagellum</keyword>
<keyword id="KW-0574">Periplasm</keyword>
<keyword id="KW-0732">Signal</keyword>
<feature type="signal peptide" evidence="1">
    <location>
        <begin position="1"/>
        <end position="19"/>
    </location>
</feature>
<feature type="chain" id="PRO_1000123973" description="Flagellar P-ring protein">
    <location>
        <begin position="20"/>
        <end position="365"/>
    </location>
</feature>
<organism>
    <name type="scientific">Escherichia fergusonii (strain ATCC 35469 / DSM 13698 / CCUG 18766 / IAM 14443 / JCM 21226 / LMG 7866 / NBRC 102419 / NCTC 12128 / CDC 0568-73)</name>
    <dbReference type="NCBI Taxonomy" id="585054"/>
    <lineage>
        <taxon>Bacteria</taxon>
        <taxon>Pseudomonadati</taxon>
        <taxon>Pseudomonadota</taxon>
        <taxon>Gammaproteobacteria</taxon>
        <taxon>Enterobacterales</taxon>
        <taxon>Enterobacteriaceae</taxon>
        <taxon>Escherichia</taxon>
    </lineage>
</organism>
<proteinExistence type="inferred from homology"/>
<reference key="1">
    <citation type="journal article" date="2009" name="PLoS Genet.">
        <title>Organised genome dynamics in the Escherichia coli species results in highly diverse adaptive paths.</title>
        <authorList>
            <person name="Touchon M."/>
            <person name="Hoede C."/>
            <person name="Tenaillon O."/>
            <person name="Barbe V."/>
            <person name="Baeriswyl S."/>
            <person name="Bidet P."/>
            <person name="Bingen E."/>
            <person name="Bonacorsi S."/>
            <person name="Bouchier C."/>
            <person name="Bouvet O."/>
            <person name="Calteau A."/>
            <person name="Chiapello H."/>
            <person name="Clermont O."/>
            <person name="Cruveiller S."/>
            <person name="Danchin A."/>
            <person name="Diard M."/>
            <person name="Dossat C."/>
            <person name="Karoui M.E."/>
            <person name="Frapy E."/>
            <person name="Garry L."/>
            <person name="Ghigo J.M."/>
            <person name="Gilles A.M."/>
            <person name="Johnson J."/>
            <person name="Le Bouguenec C."/>
            <person name="Lescat M."/>
            <person name="Mangenot S."/>
            <person name="Martinez-Jehanne V."/>
            <person name="Matic I."/>
            <person name="Nassif X."/>
            <person name="Oztas S."/>
            <person name="Petit M.A."/>
            <person name="Pichon C."/>
            <person name="Rouy Z."/>
            <person name="Ruf C.S."/>
            <person name="Schneider D."/>
            <person name="Tourret J."/>
            <person name="Vacherie B."/>
            <person name="Vallenet D."/>
            <person name="Medigue C."/>
            <person name="Rocha E.P.C."/>
            <person name="Denamur E."/>
        </authorList>
    </citation>
    <scope>NUCLEOTIDE SEQUENCE [LARGE SCALE GENOMIC DNA]</scope>
    <source>
        <strain>ATCC 35469 / DSM 13698 / BCRC 15582 / CCUG 18766 / IAM 14443 / JCM 21226 / LMG 7866 / NBRC 102419 / NCTC 12128 / CDC 0568-73</strain>
    </source>
</reference>